<organism>
    <name type="scientific">Streptococcus pneumoniae serotype 2 (strain D39 / NCTC 7466)</name>
    <dbReference type="NCBI Taxonomy" id="373153"/>
    <lineage>
        <taxon>Bacteria</taxon>
        <taxon>Bacillati</taxon>
        <taxon>Bacillota</taxon>
        <taxon>Bacilli</taxon>
        <taxon>Lactobacillales</taxon>
        <taxon>Streptococcaceae</taxon>
        <taxon>Streptococcus</taxon>
    </lineage>
</organism>
<protein>
    <recommendedName>
        <fullName evidence="1">DNA replication and repair protein RecF</fullName>
    </recommendedName>
</protein>
<dbReference type="EMBL" id="CP000410">
    <property type="protein sequence ID" value="ABJ54836.1"/>
    <property type="molecule type" value="Genomic_DNA"/>
</dbReference>
<dbReference type="RefSeq" id="WP_000266662.1">
    <property type="nucleotide sequence ID" value="NZ_JAMLJR010000007.1"/>
</dbReference>
<dbReference type="SMR" id="Q04HV1"/>
<dbReference type="PaxDb" id="373153-SPD_2054"/>
<dbReference type="KEGG" id="spd:SPD_2054"/>
<dbReference type="eggNOG" id="COG1195">
    <property type="taxonomic scope" value="Bacteria"/>
</dbReference>
<dbReference type="HOGENOM" id="CLU_040267_0_1_9"/>
<dbReference type="BioCyc" id="SPNE373153:G1G6V-2204-MONOMER"/>
<dbReference type="Proteomes" id="UP000001452">
    <property type="component" value="Chromosome"/>
</dbReference>
<dbReference type="GO" id="GO:0005737">
    <property type="term" value="C:cytoplasm"/>
    <property type="evidence" value="ECO:0007669"/>
    <property type="project" value="UniProtKB-SubCell"/>
</dbReference>
<dbReference type="GO" id="GO:0005524">
    <property type="term" value="F:ATP binding"/>
    <property type="evidence" value="ECO:0007669"/>
    <property type="project" value="UniProtKB-UniRule"/>
</dbReference>
<dbReference type="GO" id="GO:0003697">
    <property type="term" value="F:single-stranded DNA binding"/>
    <property type="evidence" value="ECO:0007669"/>
    <property type="project" value="UniProtKB-UniRule"/>
</dbReference>
<dbReference type="GO" id="GO:0006260">
    <property type="term" value="P:DNA replication"/>
    <property type="evidence" value="ECO:0007669"/>
    <property type="project" value="UniProtKB-UniRule"/>
</dbReference>
<dbReference type="GO" id="GO:0000731">
    <property type="term" value="P:DNA synthesis involved in DNA repair"/>
    <property type="evidence" value="ECO:0007669"/>
    <property type="project" value="TreeGrafter"/>
</dbReference>
<dbReference type="GO" id="GO:0006302">
    <property type="term" value="P:double-strand break repair"/>
    <property type="evidence" value="ECO:0007669"/>
    <property type="project" value="TreeGrafter"/>
</dbReference>
<dbReference type="GO" id="GO:0009432">
    <property type="term" value="P:SOS response"/>
    <property type="evidence" value="ECO:0007669"/>
    <property type="project" value="UniProtKB-UniRule"/>
</dbReference>
<dbReference type="CDD" id="cd03242">
    <property type="entry name" value="ABC_RecF"/>
    <property type="match status" value="1"/>
</dbReference>
<dbReference type="FunFam" id="1.20.1050.90:FF:000002">
    <property type="entry name" value="DNA replication and repair protein RecF"/>
    <property type="match status" value="1"/>
</dbReference>
<dbReference type="Gene3D" id="3.40.50.300">
    <property type="entry name" value="P-loop containing nucleotide triphosphate hydrolases"/>
    <property type="match status" value="1"/>
</dbReference>
<dbReference type="Gene3D" id="1.20.1050.90">
    <property type="entry name" value="RecF/RecN/SMC, N-terminal domain"/>
    <property type="match status" value="1"/>
</dbReference>
<dbReference type="HAMAP" id="MF_00365">
    <property type="entry name" value="RecF"/>
    <property type="match status" value="1"/>
</dbReference>
<dbReference type="InterPro" id="IPR001238">
    <property type="entry name" value="DNA-binding_RecF"/>
</dbReference>
<dbReference type="InterPro" id="IPR018078">
    <property type="entry name" value="DNA-binding_RecF_CS"/>
</dbReference>
<dbReference type="InterPro" id="IPR027417">
    <property type="entry name" value="P-loop_NTPase"/>
</dbReference>
<dbReference type="InterPro" id="IPR003395">
    <property type="entry name" value="RecF/RecN/SMC_N"/>
</dbReference>
<dbReference type="InterPro" id="IPR042174">
    <property type="entry name" value="RecF_2"/>
</dbReference>
<dbReference type="NCBIfam" id="TIGR00611">
    <property type="entry name" value="recf"/>
    <property type="match status" value="1"/>
</dbReference>
<dbReference type="PANTHER" id="PTHR32182">
    <property type="entry name" value="DNA REPLICATION AND REPAIR PROTEIN RECF"/>
    <property type="match status" value="1"/>
</dbReference>
<dbReference type="PANTHER" id="PTHR32182:SF0">
    <property type="entry name" value="DNA REPLICATION AND REPAIR PROTEIN RECF"/>
    <property type="match status" value="1"/>
</dbReference>
<dbReference type="Pfam" id="PF02463">
    <property type="entry name" value="SMC_N"/>
    <property type="match status" value="1"/>
</dbReference>
<dbReference type="SUPFAM" id="SSF52540">
    <property type="entry name" value="P-loop containing nucleoside triphosphate hydrolases"/>
    <property type="match status" value="1"/>
</dbReference>
<dbReference type="PROSITE" id="PS00617">
    <property type="entry name" value="RECF_1"/>
    <property type="match status" value="1"/>
</dbReference>
<dbReference type="PROSITE" id="PS00618">
    <property type="entry name" value="RECF_2"/>
    <property type="match status" value="1"/>
</dbReference>
<proteinExistence type="inferred from homology"/>
<feature type="chain" id="PRO_1000048583" description="DNA replication and repair protein RecF">
    <location>
        <begin position="1"/>
        <end position="365"/>
    </location>
</feature>
<feature type="binding site" evidence="1">
    <location>
        <begin position="30"/>
        <end position="37"/>
    </location>
    <ligand>
        <name>ATP</name>
        <dbReference type="ChEBI" id="CHEBI:30616"/>
    </ligand>
</feature>
<name>RECF_STRP2</name>
<comment type="function">
    <text evidence="1">The RecF protein is involved in DNA metabolism; it is required for DNA replication and normal SOS inducibility. RecF binds preferentially to single-stranded, linear DNA. It also seems to bind ATP.</text>
</comment>
<comment type="subcellular location">
    <subcellularLocation>
        <location evidence="1">Cytoplasm</location>
    </subcellularLocation>
</comment>
<comment type="similarity">
    <text evidence="1">Belongs to the RecF family.</text>
</comment>
<sequence length="365" mass="41916">MWLQHLSLKTFRNYKETKIDFNPKLNVFLGRNAQGKTNMLEAIYFLALTRSHRTRTDKNLIHFDEEQLHLSGLVQKKTGSIPLEIELTQKGRVTKVNHLKQARLSDYVGHMNVVLFAPEDLQLIKGAPSIRRKFIDMELGQIKPIYLSDLTNYNHILKQRNTYLKSAQKIDETFLSVLDDQLVDYGCRVMNHRLDFIKKLESFGRKKHFELSNQIEELSISYQSSVNITDKQNLSESFKIALEKSRSRDLFKKNTGVGPHRDDISFYINGMDASFGSQGQHRSLVLSIKLAEIELMESITTESPILLLDDVMSELDNTRQLKLLETISQSIQTFITTTSLDHLQNLPENLSIFTIQDGKASVNGN</sequence>
<evidence type="ECO:0000255" key="1">
    <source>
        <dbReference type="HAMAP-Rule" id="MF_00365"/>
    </source>
</evidence>
<gene>
    <name evidence="1" type="primary">recF</name>
    <name type="ordered locus">SPD_2054</name>
</gene>
<accession>Q04HV1</accession>
<reference key="1">
    <citation type="journal article" date="2007" name="J. Bacteriol.">
        <title>Genome sequence of Avery's virulent serotype 2 strain D39 of Streptococcus pneumoniae and comparison with that of unencapsulated laboratory strain R6.</title>
        <authorList>
            <person name="Lanie J.A."/>
            <person name="Ng W.-L."/>
            <person name="Kazmierczak K.M."/>
            <person name="Andrzejewski T.M."/>
            <person name="Davidsen T.M."/>
            <person name="Wayne K.J."/>
            <person name="Tettelin H."/>
            <person name="Glass J.I."/>
            <person name="Winkler M.E."/>
        </authorList>
    </citation>
    <scope>NUCLEOTIDE SEQUENCE [LARGE SCALE GENOMIC DNA]</scope>
    <source>
        <strain>D39 / NCTC 7466</strain>
    </source>
</reference>
<keyword id="KW-0067">ATP-binding</keyword>
<keyword id="KW-0963">Cytoplasm</keyword>
<keyword id="KW-0227">DNA damage</keyword>
<keyword id="KW-0234">DNA repair</keyword>
<keyword id="KW-0235">DNA replication</keyword>
<keyword id="KW-0238">DNA-binding</keyword>
<keyword id="KW-0547">Nucleotide-binding</keyword>
<keyword id="KW-1185">Reference proteome</keyword>
<keyword id="KW-0742">SOS response</keyword>